<protein>
    <recommendedName>
        <fullName>Cytochrome b</fullName>
    </recommendedName>
    <alternativeName>
        <fullName>Complex III subunit 3</fullName>
    </alternativeName>
    <alternativeName>
        <fullName>Complex III subunit III</fullName>
    </alternativeName>
    <alternativeName>
        <fullName>Cytochrome b-c1 complex subunit 3</fullName>
    </alternativeName>
    <alternativeName>
        <fullName>Ubiquinol-cytochrome-c reductase complex cytochrome b subunit</fullName>
    </alternativeName>
</protein>
<name>CYB_MYOKE</name>
<organism>
    <name type="scientific">Myotis keaysi</name>
    <name type="common">Hairy-legged myotis</name>
    <dbReference type="NCBI Taxonomy" id="159327"/>
    <lineage>
        <taxon>Eukaryota</taxon>
        <taxon>Metazoa</taxon>
        <taxon>Chordata</taxon>
        <taxon>Craniata</taxon>
        <taxon>Vertebrata</taxon>
        <taxon>Euteleostomi</taxon>
        <taxon>Mammalia</taxon>
        <taxon>Eutheria</taxon>
        <taxon>Laurasiatheria</taxon>
        <taxon>Chiroptera</taxon>
        <taxon>Yangochiroptera</taxon>
        <taxon>Vespertilionidae</taxon>
        <taxon>Myotis</taxon>
    </lineage>
</organism>
<feature type="chain" id="PRO_0000061239" description="Cytochrome b">
    <location>
        <begin position="1"/>
        <end position="379"/>
    </location>
</feature>
<feature type="transmembrane region" description="Helical" evidence="2">
    <location>
        <begin position="33"/>
        <end position="53"/>
    </location>
</feature>
<feature type="transmembrane region" description="Helical" evidence="2">
    <location>
        <begin position="77"/>
        <end position="98"/>
    </location>
</feature>
<feature type="transmembrane region" description="Helical" evidence="2">
    <location>
        <begin position="113"/>
        <end position="133"/>
    </location>
</feature>
<feature type="transmembrane region" description="Helical" evidence="2">
    <location>
        <begin position="178"/>
        <end position="198"/>
    </location>
</feature>
<feature type="transmembrane region" description="Helical" evidence="2">
    <location>
        <begin position="226"/>
        <end position="246"/>
    </location>
</feature>
<feature type="transmembrane region" description="Helical" evidence="2">
    <location>
        <begin position="288"/>
        <end position="308"/>
    </location>
</feature>
<feature type="transmembrane region" description="Helical" evidence="2">
    <location>
        <begin position="320"/>
        <end position="340"/>
    </location>
</feature>
<feature type="transmembrane region" description="Helical" evidence="2">
    <location>
        <begin position="347"/>
        <end position="367"/>
    </location>
</feature>
<feature type="binding site" description="axial binding residue" evidence="2">
    <location>
        <position position="83"/>
    </location>
    <ligand>
        <name>heme b</name>
        <dbReference type="ChEBI" id="CHEBI:60344"/>
        <label>b562</label>
    </ligand>
    <ligandPart>
        <name>Fe</name>
        <dbReference type="ChEBI" id="CHEBI:18248"/>
    </ligandPart>
</feature>
<feature type="binding site" description="axial binding residue" evidence="2">
    <location>
        <position position="97"/>
    </location>
    <ligand>
        <name>heme b</name>
        <dbReference type="ChEBI" id="CHEBI:60344"/>
        <label>b566</label>
    </ligand>
    <ligandPart>
        <name>Fe</name>
        <dbReference type="ChEBI" id="CHEBI:18248"/>
    </ligandPart>
</feature>
<feature type="binding site" description="axial binding residue" evidence="2">
    <location>
        <position position="182"/>
    </location>
    <ligand>
        <name>heme b</name>
        <dbReference type="ChEBI" id="CHEBI:60344"/>
        <label>b562</label>
    </ligand>
    <ligandPart>
        <name>Fe</name>
        <dbReference type="ChEBI" id="CHEBI:18248"/>
    </ligandPart>
</feature>
<feature type="binding site" description="axial binding residue" evidence="2">
    <location>
        <position position="196"/>
    </location>
    <ligand>
        <name>heme b</name>
        <dbReference type="ChEBI" id="CHEBI:60344"/>
        <label>b566</label>
    </ligand>
    <ligandPart>
        <name>Fe</name>
        <dbReference type="ChEBI" id="CHEBI:18248"/>
    </ligandPart>
</feature>
<feature type="binding site" evidence="2">
    <location>
        <position position="201"/>
    </location>
    <ligand>
        <name>a ubiquinone</name>
        <dbReference type="ChEBI" id="CHEBI:16389"/>
    </ligand>
</feature>
<sequence>MTNIRKSHPLMKIINSSFIDLPAPSNISSWWNFGSLLGICLALQILTGLFLAMHYTSDTATAFNSVTHICRDVNYGWVLRYLHANGASMFFICLYLHVGRGLYYGSYMYTETWNIGVILLFAVMATAFMGYVLPWGQMSFWGATVITNLLSAIPYIGTDLVQWMWGGFSVDKATLTRFFAFHFVLPFIIAAMVMVHLLFLHETGSNNPTGIPSNVDMIPFHPYYTIKDILGLLLMITVLLTLVLFSPDLLGDPDNYMPANPLNTPPHIKPEWYFLFAYAILRSIPNKLGGVLALVLSILILIIIPLLHTSKQRSMMFRPLSQCLFWLLAADLFTLTWIGGQPVEHPYVIIGQLASILYFSIIIILMPLISLMENHLLKW</sequence>
<geneLocation type="mitochondrion"/>
<reference key="1">
    <citation type="journal article" date="2001" name="Mol. Phylogenet. Evol.">
        <title>Molecular systematics of bats of the genus Myotis (Vespertilionidae) suggests deterministic ecomorphological convergences.</title>
        <authorList>
            <person name="Ruedi M."/>
            <person name="Mayer F."/>
        </authorList>
    </citation>
    <scope>NUCLEOTIDE SEQUENCE [GENOMIC DNA]</scope>
    <source>
        <strain>Isolate TK 13532</strain>
    </source>
</reference>
<accession>Q957B0</accession>
<proteinExistence type="inferred from homology"/>
<dbReference type="EMBL" id="AF376852">
    <property type="protein sequence ID" value="AAK57671.1"/>
    <property type="molecule type" value="Genomic_DNA"/>
</dbReference>
<dbReference type="SMR" id="Q957B0"/>
<dbReference type="GO" id="GO:0005743">
    <property type="term" value="C:mitochondrial inner membrane"/>
    <property type="evidence" value="ECO:0007669"/>
    <property type="project" value="UniProtKB-SubCell"/>
</dbReference>
<dbReference type="GO" id="GO:0045275">
    <property type="term" value="C:respiratory chain complex III"/>
    <property type="evidence" value="ECO:0007669"/>
    <property type="project" value="InterPro"/>
</dbReference>
<dbReference type="GO" id="GO:0046872">
    <property type="term" value="F:metal ion binding"/>
    <property type="evidence" value="ECO:0007669"/>
    <property type="project" value="UniProtKB-KW"/>
</dbReference>
<dbReference type="GO" id="GO:0008121">
    <property type="term" value="F:ubiquinol-cytochrome-c reductase activity"/>
    <property type="evidence" value="ECO:0007669"/>
    <property type="project" value="InterPro"/>
</dbReference>
<dbReference type="GO" id="GO:0006122">
    <property type="term" value="P:mitochondrial electron transport, ubiquinol to cytochrome c"/>
    <property type="evidence" value="ECO:0007669"/>
    <property type="project" value="TreeGrafter"/>
</dbReference>
<dbReference type="CDD" id="cd00290">
    <property type="entry name" value="cytochrome_b_C"/>
    <property type="match status" value="1"/>
</dbReference>
<dbReference type="CDD" id="cd00284">
    <property type="entry name" value="Cytochrome_b_N"/>
    <property type="match status" value="1"/>
</dbReference>
<dbReference type="FunFam" id="1.20.810.10:FF:000002">
    <property type="entry name" value="Cytochrome b"/>
    <property type="match status" value="1"/>
</dbReference>
<dbReference type="Gene3D" id="1.20.810.10">
    <property type="entry name" value="Cytochrome Bc1 Complex, Chain C"/>
    <property type="match status" value="1"/>
</dbReference>
<dbReference type="InterPro" id="IPR005798">
    <property type="entry name" value="Cyt_b/b6_C"/>
</dbReference>
<dbReference type="InterPro" id="IPR036150">
    <property type="entry name" value="Cyt_b/b6_C_sf"/>
</dbReference>
<dbReference type="InterPro" id="IPR005797">
    <property type="entry name" value="Cyt_b/b6_N"/>
</dbReference>
<dbReference type="InterPro" id="IPR027387">
    <property type="entry name" value="Cytb/b6-like_sf"/>
</dbReference>
<dbReference type="InterPro" id="IPR030689">
    <property type="entry name" value="Cytochrome_b"/>
</dbReference>
<dbReference type="InterPro" id="IPR048260">
    <property type="entry name" value="Cytochrome_b_C_euk/bac"/>
</dbReference>
<dbReference type="InterPro" id="IPR048259">
    <property type="entry name" value="Cytochrome_b_N_euk/bac"/>
</dbReference>
<dbReference type="InterPro" id="IPR016174">
    <property type="entry name" value="Di-haem_cyt_TM"/>
</dbReference>
<dbReference type="PANTHER" id="PTHR19271">
    <property type="entry name" value="CYTOCHROME B"/>
    <property type="match status" value="1"/>
</dbReference>
<dbReference type="PANTHER" id="PTHR19271:SF16">
    <property type="entry name" value="CYTOCHROME B"/>
    <property type="match status" value="1"/>
</dbReference>
<dbReference type="Pfam" id="PF00032">
    <property type="entry name" value="Cytochrom_B_C"/>
    <property type="match status" value="1"/>
</dbReference>
<dbReference type="Pfam" id="PF00033">
    <property type="entry name" value="Cytochrome_B"/>
    <property type="match status" value="1"/>
</dbReference>
<dbReference type="PIRSF" id="PIRSF038885">
    <property type="entry name" value="COB"/>
    <property type="match status" value="1"/>
</dbReference>
<dbReference type="SUPFAM" id="SSF81648">
    <property type="entry name" value="a domain/subunit of cytochrome bc1 complex (Ubiquinol-cytochrome c reductase)"/>
    <property type="match status" value="1"/>
</dbReference>
<dbReference type="SUPFAM" id="SSF81342">
    <property type="entry name" value="Transmembrane di-heme cytochromes"/>
    <property type="match status" value="1"/>
</dbReference>
<dbReference type="PROSITE" id="PS51003">
    <property type="entry name" value="CYTB_CTER"/>
    <property type="match status" value="1"/>
</dbReference>
<dbReference type="PROSITE" id="PS51002">
    <property type="entry name" value="CYTB_NTER"/>
    <property type="match status" value="1"/>
</dbReference>
<evidence type="ECO:0000250" key="1"/>
<evidence type="ECO:0000250" key="2">
    <source>
        <dbReference type="UniProtKB" id="P00157"/>
    </source>
</evidence>
<evidence type="ECO:0000255" key="3">
    <source>
        <dbReference type="PROSITE-ProRule" id="PRU00967"/>
    </source>
</evidence>
<evidence type="ECO:0000255" key="4">
    <source>
        <dbReference type="PROSITE-ProRule" id="PRU00968"/>
    </source>
</evidence>
<keyword id="KW-0249">Electron transport</keyword>
<keyword id="KW-0349">Heme</keyword>
<keyword id="KW-0408">Iron</keyword>
<keyword id="KW-0472">Membrane</keyword>
<keyword id="KW-0479">Metal-binding</keyword>
<keyword id="KW-0496">Mitochondrion</keyword>
<keyword id="KW-0999">Mitochondrion inner membrane</keyword>
<keyword id="KW-0679">Respiratory chain</keyword>
<keyword id="KW-0812">Transmembrane</keyword>
<keyword id="KW-1133">Transmembrane helix</keyword>
<keyword id="KW-0813">Transport</keyword>
<keyword id="KW-0830">Ubiquinone</keyword>
<gene>
    <name type="primary">MT-CYB</name>
    <name type="synonym">COB</name>
    <name type="synonym">CYTB</name>
    <name type="synonym">MTCYB</name>
</gene>
<comment type="function">
    <text evidence="2">Component of the ubiquinol-cytochrome c reductase complex (complex III or cytochrome b-c1 complex) that is part of the mitochondrial respiratory chain. The b-c1 complex mediates electron transfer from ubiquinol to cytochrome c. Contributes to the generation of a proton gradient across the mitochondrial membrane that is then used for ATP synthesis.</text>
</comment>
<comment type="cofactor">
    <cofactor evidence="2">
        <name>heme b</name>
        <dbReference type="ChEBI" id="CHEBI:60344"/>
    </cofactor>
    <text evidence="2">Binds 2 heme b groups non-covalently.</text>
</comment>
<comment type="subunit">
    <text evidence="2">The cytochrome bc1 complex contains 11 subunits: 3 respiratory subunits (MT-CYB, CYC1 and UQCRFS1), 2 core proteins (UQCRC1 and UQCRC2) and 6 low-molecular weight proteins (UQCRH/QCR6, UQCRB/QCR7, UQCRQ/QCR8, UQCR10/QCR9, UQCR11/QCR10 and a cleavage product of UQCRFS1). This cytochrome bc1 complex then forms a dimer.</text>
</comment>
<comment type="subcellular location">
    <subcellularLocation>
        <location evidence="2">Mitochondrion inner membrane</location>
        <topology evidence="2">Multi-pass membrane protein</topology>
    </subcellularLocation>
</comment>
<comment type="miscellaneous">
    <text evidence="1">Heme 1 (or BL or b562) is low-potential and absorbs at about 562 nm, and heme 2 (or BH or b566) is high-potential and absorbs at about 566 nm.</text>
</comment>
<comment type="similarity">
    <text evidence="3 4">Belongs to the cytochrome b family.</text>
</comment>
<comment type="caution">
    <text evidence="2">The full-length protein contains only eight transmembrane helices, not nine as predicted by bioinformatics tools.</text>
</comment>